<evidence type="ECO:0000255" key="1">
    <source>
        <dbReference type="HAMAP-Rule" id="MF_01616"/>
    </source>
</evidence>
<sequence>MKKYLALALIAPLLISCSTTKKGDTYNEAWVKDTNGFDILMGQFAHNIENIWGFKEVVIAGPKDYVKYTDQYQTRSHINFDDGTITIETIAGTEPAAHLRRAIIKTLLMGDDPSSVDLYSDVDDITISKEPFLYGQVVDNTGQPIRWEGRASNFADYLLKNRLKSRSNGLRIIYSVTINMVPNHLDKRAHKYLGMVRQASRKYGVDESLILAIMQTESSFNPYAVSRSDALGLMQVVQHTAGKDVFRSQGKSGTPSRSFLFDPASNIDTGTAYLAMLNNVYLGGIDNPTSRRYAVITAYNGGAGSVLRVFSNDKIQAANIINTMTPGDVYQTLTTRHPSAESRRYLYKVNTAQKSYRRR</sequence>
<organism>
    <name type="scientific">Escherichia coli O127:H6 (strain E2348/69 / EPEC)</name>
    <dbReference type="NCBI Taxonomy" id="574521"/>
    <lineage>
        <taxon>Bacteria</taxon>
        <taxon>Pseudomonadati</taxon>
        <taxon>Pseudomonadota</taxon>
        <taxon>Gammaproteobacteria</taxon>
        <taxon>Enterobacterales</taxon>
        <taxon>Enterobacteriaceae</taxon>
        <taxon>Escherichia</taxon>
    </lineage>
</organism>
<accession>B7UI10</accession>
<reference key="1">
    <citation type="journal article" date="2009" name="J. Bacteriol.">
        <title>Complete genome sequence and comparative genome analysis of enteropathogenic Escherichia coli O127:H6 strain E2348/69.</title>
        <authorList>
            <person name="Iguchi A."/>
            <person name="Thomson N.R."/>
            <person name="Ogura Y."/>
            <person name="Saunders D."/>
            <person name="Ooka T."/>
            <person name="Henderson I.R."/>
            <person name="Harris D."/>
            <person name="Asadulghani M."/>
            <person name="Kurokawa K."/>
            <person name="Dean P."/>
            <person name="Kenny B."/>
            <person name="Quail M.A."/>
            <person name="Thurston S."/>
            <person name="Dougan G."/>
            <person name="Hayashi T."/>
            <person name="Parkhill J."/>
            <person name="Frankel G."/>
        </authorList>
    </citation>
    <scope>NUCLEOTIDE SEQUENCE [LARGE SCALE GENOMIC DNA]</scope>
    <source>
        <strain>E2348/69 / EPEC</strain>
    </source>
</reference>
<keyword id="KW-0998">Cell outer membrane</keyword>
<keyword id="KW-0961">Cell wall biogenesis/degradation</keyword>
<keyword id="KW-0449">Lipoprotein</keyword>
<keyword id="KW-0456">Lyase</keyword>
<keyword id="KW-0472">Membrane</keyword>
<keyword id="KW-0564">Palmitate</keyword>
<keyword id="KW-1185">Reference proteome</keyword>
<keyword id="KW-0732">Signal</keyword>
<name>MLTC_ECO27</name>
<gene>
    <name evidence="1" type="primary">mltC</name>
    <name type="ordered locus">E2348C_3216</name>
</gene>
<feature type="signal peptide" evidence="1">
    <location>
        <begin position="1"/>
        <end position="16"/>
    </location>
</feature>
<feature type="chain" id="PRO_1000185917" description="Membrane-bound lytic murein transglycosylase C">
    <location>
        <begin position="17"/>
        <end position="359"/>
    </location>
</feature>
<feature type="lipid moiety-binding region" description="N-palmitoyl cysteine" evidence="1">
    <location>
        <position position="17"/>
    </location>
</feature>
<feature type="lipid moiety-binding region" description="S-diacylglycerol cysteine" evidence="1">
    <location>
        <position position="17"/>
    </location>
</feature>
<comment type="function">
    <text evidence="1">Murein-degrading enzyme. May play a role in recycling of muropeptides during cell elongation and/or cell division.</text>
</comment>
<comment type="catalytic activity">
    <reaction evidence="1">
        <text>Exolytic cleavage of the (1-&gt;4)-beta-glycosidic linkage between N-acetylmuramic acid (MurNAc) and N-acetylglucosamine (GlcNAc) residues in peptidoglycan, from either the reducing or the non-reducing ends of the peptidoglycan chains, with concomitant formation of a 1,6-anhydrobond in the MurNAc residue.</text>
        <dbReference type="EC" id="4.2.2.n1"/>
    </reaction>
</comment>
<comment type="subcellular location">
    <subcellularLocation>
        <location evidence="1">Cell outer membrane</location>
        <topology evidence="1">Lipid-anchor</topology>
    </subcellularLocation>
</comment>
<comment type="similarity">
    <text evidence="1">Belongs to the transglycosylase Slt family.</text>
</comment>
<dbReference type="EC" id="4.2.2.n1" evidence="1"/>
<dbReference type="EMBL" id="FM180568">
    <property type="protein sequence ID" value="CAS10764.1"/>
    <property type="molecule type" value="Genomic_DNA"/>
</dbReference>
<dbReference type="RefSeq" id="WP_000760323.1">
    <property type="nucleotide sequence ID" value="NC_011601.1"/>
</dbReference>
<dbReference type="SMR" id="B7UI10"/>
<dbReference type="CAZy" id="GH23">
    <property type="family name" value="Glycoside Hydrolase Family 23"/>
</dbReference>
<dbReference type="GeneID" id="86861053"/>
<dbReference type="KEGG" id="ecg:E2348C_3216"/>
<dbReference type="HOGENOM" id="CLU_044583_0_0_6"/>
<dbReference type="Proteomes" id="UP000008205">
    <property type="component" value="Chromosome"/>
</dbReference>
<dbReference type="GO" id="GO:0009279">
    <property type="term" value="C:cell outer membrane"/>
    <property type="evidence" value="ECO:0007669"/>
    <property type="project" value="UniProtKB-SubCell"/>
</dbReference>
<dbReference type="GO" id="GO:0016798">
    <property type="term" value="F:hydrolase activity, acting on glycosyl bonds"/>
    <property type="evidence" value="ECO:0007669"/>
    <property type="project" value="InterPro"/>
</dbReference>
<dbReference type="GO" id="GO:0008933">
    <property type="term" value="F:peptidoglycan lytic transglycosylase activity"/>
    <property type="evidence" value="ECO:0007669"/>
    <property type="project" value="UniProtKB-UniRule"/>
</dbReference>
<dbReference type="GO" id="GO:0016998">
    <property type="term" value="P:cell wall macromolecule catabolic process"/>
    <property type="evidence" value="ECO:0007669"/>
    <property type="project" value="UniProtKB-UniRule"/>
</dbReference>
<dbReference type="GO" id="GO:0071555">
    <property type="term" value="P:cell wall organization"/>
    <property type="evidence" value="ECO:0007669"/>
    <property type="project" value="UniProtKB-KW"/>
</dbReference>
<dbReference type="GO" id="GO:0000270">
    <property type="term" value="P:peptidoglycan metabolic process"/>
    <property type="evidence" value="ECO:0007669"/>
    <property type="project" value="InterPro"/>
</dbReference>
<dbReference type="CDD" id="cd16893">
    <property type="entry name" value="LT_MltC_MltE"/>
    <property type="match status" value="1"/>
</dbReference>
<dbReference type="FunFam" id="1.10.530.10:FF:000002">
    <property type="entry name" value="Membrane-bound lytic murein transglycosylase C"/>
    <property type="match status" value="1"/>
</dbReference>
<dbReference type="Gene3D" id="1.10.530.10">
    <property type="match status" value="1"/>
</dbReference>
<dbReference type="HAMAP" id="MF_01616">
    <property type="entry name" value="MltC"/>
    <property type="match status" value="1"/>
</dbReference>
<dbReference type="InterPro" id="IPR023346">
    <property type="entry name" value="Lysozyme-like_dom_sf"/>
</dbReference>
<dbReference type="InterPro" id="IPR023664">
    <property type="entry name" value="Murein_transglycosylaseC"/>
</dbReference>
<dbReference type="InterPro" id="IPR024570">
    <property type="entry name" value="Murein_transglycosylaseC_N"/>
</dbReference>
<dbReference type="InterPro" id="IPR000189">
    <property type="entry name" value="Transglyc_AS"/>
</dbReference>
<dbReference type="InterPro" id="IPR008258">
    <property type="entry name" value="Transglycosylase_SLT_dom_1"/>
</dbReference>
<dbReference type="NCBIfam" id="NF008670">
    <property type="entry name" value="PRK11671.1"/>
    <property type="match status" value="1"/>
</dbReference>
<dbReference type="PANTHER" id="PTHR37423:SF2">
    <property type="entry name" value="MEMBRANE-BOUND LYTIC MUREIN TRANSGLYCOSYLASE C"/>
    <property type="match status" value="1"/>
</dbReference>
<dbReference type="PANTHER" id="PTHR37423">
    <property type="entry name" value="SOLUBLE LYTIC MUREIN TRANSGLYCOSYLASE-RELATED"/>
    <property type="match status" value="1"/>
</dbReference>
<dbReference type="Pfam" id="PF11873">
    <property type="entry name" value="Mltc_N"/>
    <property type="match status" value="1"/>
</dbReference>
<dbReference type="Pfam" id="PF01464">
    <property type="entry name" value="SLT"/>
    <property type="match status" value="1"/>
</dbReference>
<dbReference type="SUPFAM" id="SSF53955">
    <property type="entry name" value="Lysozyme-like"/>
    <property type="match status" value="1"/>
</dbReference>
<dbReference type="PROSITE" id="PS51257">
    <property type="entry name" value="PROKAR_LIPOPROTEIN"/>
    <property type="match status" value="1"/>
</dbReference>
<dbReference type="PROSITE" id="PS00922">
    <property type="entry name" value="TRANSGLYCOSYLASE"/>
    <property type="match status" value="1"/>
</dbReference>
<proteinExistence type="inferred from homology"/>
<protein>
    <recommendedName>
        <fullName evidence="1">Membrane-bound lytic murein transglycosylase C</fullName>
        <ecNumber evidence="1">4.2.2.n1</ecNumber>
    </recommendedName>
    <alternativeName>
        <fullName evidence="1">Murein lyase C</fullName>
    </alternativeName>
</protein>